<keyword id="KW-0131">Cell cycle</keyword>
<keyword id="KW-0132">Cell division</keyword>
<keyword id="KW-0133">Cell shape</keyword>
<keyword id="KW-0961">Cell wall biogenesis/degradation</keyword>
<keyword id="KW-0963">Cytoplasm</keyword>
<keyword id="KW-0573">Peptidoglycan synthesis</keyword>
<keyword id="KW-0670">Pyruvate</keyword>
<keyword id="KW-0808">Transferase</keyword>
<sequence length="419" mass="45367">MQKLIIYGGKPLRGSINISGAKNAVLPIMAASILTDKLHITNVPKLTDVSTMKGLLRSHGADIETIEHQDEFELIINTRNINNFTADYDIVRKMRASIWVLGPLLTKYGKAKVSLPGGCAIGARQVDLHIAVLKAMGAMIEIEGGYINASSKGRLKGTHFIFDKVSVGATINAILAAVLAEGETLLFNCGREPEIVDLCNCLIKMGADIIGVGTSEITIKGKDALNKVSYKVLSDRIEAGTYMLAAAITKGDVKICGIDYHIIENLALKLIETGIKVVPIDNGVQVIYEGKLNAVNLETNPYPGFATDLQAQFMSLMTLSSGVSMITENIFENRFMHVPELCRMGADILVRGNKAIVRGVEMLKGAEVMASDLRASVSLILAGLSTNSKTVLHRIYHLDRGFQDLEKKLSNCGADIKRV</sequence>
<reference key="1">
    <citation type="submission" date="2007-09" db="EMBL/GenBank/DDBJ databases">
        <title>Complete genome sequence of Rickettsia canadensis.</title>
        <authorList>
            <person name="Madan A."/>
            <person name="Fahey J."/>
            <person name="Helton E."/>
            <person name="Ketteman M."/>
            <person name="Madan A."/>
            <person name="Rodrigues S."/>
            <person name="Sanchez A."/>
            <person name="Whiting M."/>
            <person name="Dasch G."/>
            <person name="Eremeeva M."/>
        </authorList>
    </citation>
    <scope>NUCLEOTIDE SEQUENCE [LARGE SCALE GENOMIC DNA]</scope>
    <source>
        <strain>McKiel</strain>
    </source>
</reference>
<name>MURA_RICCK</name>
<feature type="chain" id="PRO_1000023092" description="UDP-N-acetylglucosamine 1-carboxyvinyltransferase">
    <location>
        <begin position="1"/>
        <end position="419"/>
    </location>
</feature>
<feature type="active site" description="Proton donor" evidence="1">
    <location>
        <position position="119"/>
    </location>
</feature>
<feature type="binding site" evidence="1">
    <location>
        <begin position="22"/>
        <end position="23"/>
    </location>
    <ligand>
        <name>phosphoenolpyruvate</name>
        <dbReference type="ChEBI" id="CHEBI:58702"/>
    </ligand>
</feature>
<feature type="binding site" evidence="1">
    <location>
        <position position="95"/>
    </location>
    <ligand>
        <name>UDP-N-acetyl-alpha-D-glucosamine</name>
        <dbReference type="ChEBI" id="CHEBI:57705"/>
    </ligand>
</feature>
<feature type="binding site" evidence="1">
    <location>
        <begin position="164"/>
        <end position="167"/>
    </location>
    <ligand>
        <name>UDP-N-acetyl-alpha-D-glucosamine</name>
        <dbReference type="ChEBI" id="CHEBI:57705"/>
    </ligand>
</feature>
<feature type="binding site" evidence="1">
    <location>
        <position position="308"/>
    </location>
    <ligand>
        <name>UDP-N-acetyl-alpha-D-glucosamine</name>
        <dbReference type="ChEBI" id="CHEBI:57705"/>
    </ligand>
</feature>
<feature type="binding site" evidence="1">
    <location>
        <position position="330"/>
    </location>
    <ligand>
        <name>UDP-N-acetyl-alpha-D-glucosamine</name>
        <dbReference type="ChEBI" id="CHEBI:57705"/>
    </ligand>
</feature>
<feature type="modified residue" description="2-(S-cysteinyl)pyruvic acid O-phosphothioketal" evidence="1">
    <location>
        <position position="119"/>
    </location>
</feature>
<protein>
    <recommendedName>
        <fullName evidence="1">UDP-N-acetylglucosamine 1-carboxyvinyltransferase</fullName>
        <ecNumber evidence="1">2.5.1.7</ecNumber>
    </recommendedName>
    <alternativeName>
        <fullName evidence="1">Enoylpyruvate transferase</fullName>
    </alternativeName>
    <alternativeName>
        <fullName evidence="1">UDP-N-acetylglucosamine enolpyruvyl transferase</fullName>
        <shortName evidence="1">EPT</shortName>
    </alternativeName>
</protein>
<dbReference type="EC" id="2.5.1.7" evidence="1"/>
<dbReference type="EMBL" id="CP000409">
    <property type="protein sequence ID" value="ABV73339.1"/>
    <property type="molecule type" value="Genomic_DNA"/>
</dbReference>
<dbReference type="RefSeq" id="WP_012148538.1">
    <property type="nucleotide sequence ID" value="NC_009879.1"/>
</dbReference>
<dbReference type="SMR" id="A8EYA6"/>
<dbReference type="STRING" id="293613.A1E_01970"/>
<dbReference type="KEGG" id="rcm:A1E_01970"/>
<dbReference type="eggNOG" id="COG0766">
    <property type="taxonomic scope" value="Bacteria"/>
</dbReference>
<dbReference type="HOGENOM" id="CLU_027387_0_0_5"/>
<dbReference type="UniPathway" id="UPA00219"/>
<dbReference type="Proteomes" id="UP000007056">
    <property type="component" value="Chromosome"/>
</dbReference>
<dbReference type="GO" id="GO:0005737">
    <property type="term" value="C:cytoplasm"/>
    <property type="evidence" value="ECO:0007669"/>
    <property type="project" value="UniProtKB-SubCell"/>
</dbReference>
<dbReference type="GO" id="GO:0008760">
    <property type="term" value="F:UDP-N-acetylglucosamine 1-carboxyvinyltransferase activity"/>
    <property type="evidence" value="ECO:0007669"/>
    <property type="project" value="UniProtKB-UniRule"/>
</dbReference>
<dbReference type="GO" id="GO:0051301">
    <property type="term" value="P:cell division"/>
    <property type="evidence" value="ECO:0007669"/>
    <property type="project" value="UniProtKB-KW"/>
</dbReference>
<dbReference type="GO" id="GO:0071555">
    <property type="term" value="P:cell wall organization"/>
    <property type="evidence" value="ECO:0007669"/>
    <property type="project" value="UniProtKB-KW"/>
</dbReference>
<dbReference type="GO" id="GO:0009252">
    <property type="term" value="P:peptidoglycan biosynthetic process"/>
    <property type="evidence" value="ECO:0007669"/>
    <property type="project" value="UniProtKB-UniRule"/>
</dbReference>
<dbReference type="GO" id="GO:0008360">
    <property type="term" value="P:regulation of cell shape"/>
    <property type="evidence" value="ECO:0007669"/>
    <property type="project" value="UniProtKB-KW"/>
</dbReference>
<dbReference type="GO" id="GO:0019277">
    <property type="term" value="P:UDP-N-acetylgalactosamine biosynthetic process"/>
    <property type="evidence" value="ECO:0007669"/>
    <property type="project" value="InterPro"/>
</dbReference>
<dbReference type="CDD" id="cd01555">
    <property type="entry name" value="UdpNAET"/>
    <property type="match status" value="1"/>
</dbReference>
<dbReference type="FunFam" id="3.65.10.10:FF:000001">
    <property type="entry name" value="UDP-N-acetylglucosamine 1-carboxyvinyltransferase"/>
    <property type="match status" value="1"/>
</dbReference>
<dbReference type="Gene3D" id="3.65.10.10">
    <property type="entry name" value="Enolpyruvate transferase domain"/>
    <property type="match status" value="2"/>
</dbReference>
<dbReference type="HAMAP" id="MF_00111">
    <property type="entry name" value="MurA"/>
    <property type="match status" value="1"/>
</dbReference>
<dbReference type="InterPro" id="IPR001986">
    <property type="entry name" value="Enolpyruvate_Tfrase_dom"/>
</dbReference>
<dbReference type="InterPro" id="IPR036968">
    <property type="entry name" value="Enolpyruvate_Tfrase_sf"/>
</dbReference>
<dbReference type="InterPro" id="IPR050068">
    <property type="entry name" value="MurA_subfamily"/>
</dbReference>
<dbReference type="InterPro" id="IPR013792">
    <property type="entry name" value="RNA3'P_cycl/enolpyr_Trfase_a/b"/>
</dbReference>
<dbReference type="InterPro" id="IPR005750">
    <property type="entry name" value="UDP_GlcNAc_COvinyl_MurA"/>
</dbReference>
<dbReference type="NCBIfam" id="TIGR01072">
    <property type="entry name" value="murA"/>
    <property type="match status" value="1"/>
</dbReference>
<dbReference type="NCBIfam" id="NF006873">
    <property type="entry name" value="PRK09369.1"/>
    <property type="match status" value="1"/>
</dbReference>
<dbReference type="PANTHER" id="PTHR43783">
    <property type="entry name" value="UDP-N-ACETYLGLUCOSAMINE 1-CARBOXYVINYLTRANSFERASE"/>
    <property type="match status" value="1"/>
</dbReference>
<dbReference type="PANTHER" id="PTHR43783:SF1">
    <property type="entry name" value="UDP-N-ACETYLGLUCOSAMINE 1-CARBOXYVINYLTRANSFERASE"/>
    <property type="match status" value="1"/>
</dbReference>
<dbReference type="Pfam" id="PF00275">
    <property type="entry name" value="EPSP_synthase"/>
    <property type="match status" value="1"/>
</dbReference>
<dbReference type="SUPFAM" id="SSF55205">
    <property type="entry name" value="EPT/RTPC-like"/>
    <property type="match status" value="1"/>
</dbReference>
<comment type="function">
    <text evidence="1">Cell wall formation. Adds enolpyruvyl to UDP-N-acetylglucosamine.</text>
</comment>
<comment type="catalytic activity">
    <reaction evidence="1">
        <text>phosphoenolpyruvate + UDP-N-acetyl-alpha-D-glucosamine = UDP-N-acetyl-3-O-(1-carboxyvinyl)-alpha-D-glucosamine + phosphate</text>
        <dbReference type="Rhea" id="RHEA:18681"/>
        <dbReference type="ChEBI" id="CHEBI:43474"/>
        <dbReference type="ChEBI" id="CHEBI:57705"/>
        <dbReference type="ChEBI" id="CHEBI:58702"/>
        <dbReference type="ChEBI" id="CHEBI:68483"/>
        <dbReference type="EC" id="2.5.1.7"/>
    </reaction>
</comment>
<comment type="pathway">
    <text evidence="1">Cell wall biogenesis; peptidoglycan biosynthesis.</text>
</comment>
<comment type="subcellular location">
    <subcellularLocation>
        <location evidence="1">Cytoplasm</location>
    </subcellularLocation>
</comment>
<comment type="similarity">
    <text evidence="1">Belongs to the EPSP synthase family. MurA subfamily.</text>
</comment>
<evidence type="ECO:0000255" key="1">
    <source>
        <dbReference type="HAMAP-Rule" id="MF_00111"/>
    </source>
</evidence>
<organism>
    <name type="scientific">Rickettsia canadensis (strain McKiel)</name>
    <dbReference type="NCBI Taxonomy" id="293613"/>
    <lineage>
        <taxon>Bacteria</taxon>
        <taxon>Pseudomonadati</taxon>
        <taxon>Pseudomonadota</taxon>
        <taxon>Alphaproteobacteria</taxon>
        <taxon>Rickettsiales</taxon>
        <taxon>Rickettsiaceae</taxon>
        <taxon>Rickettsieae</taxon>
        <taxon>Rickettsia</taxon>
        <taxon>belli group</taxon>
    </lineage>
</organism>
<gene>
    <name evidence="1" type="primary">murA</name>
    <name type="ordered locus">A1E_01970</name>
</gene>
<accession>A8EYA6</accession>
<proteinExistence type="inferred from homology"/>